<feature type="chain" id="PRO_0000052424" description="Flavohemoprotein">
    <location>
        <begin position="1"/>
        <end position="399"/>
    </location>
</feature>
<feature type="domain" description="Globin" evidence="2">
    <location>
        <begin position="1"/>
        <end position="138"/>
    </location>
</feature>
<feature type="domain" description="FAD-binding FR-type">
    <location>
        <begin position="152"/>
        <end position="255"/>
    </location>
</feature>
<feature type="region of interest" description="Reductase">
    <location>
        <begin position="149"/>
        <end position="399"/>
    </location>
</feature>
<feature type="active site" description="Charge relay system" evidence="1">
    <location>
        <position position="95"/>
    </location>
</feature>
<feature type="active site" description="Charge relay system" evidence="1">
    <location>
        <position position="137"/>
    </location>
</feature>
<feature type="binding site" description="proximal binding residue" evidence="1">
    <location>
        <position position="85"/>
    </location>
    <ligand>
        <name>heme b</name>
        <dbReference type="ChEBI" id="CHEBI:60344"/>
    </ligand>
    <ligandPart>
        <name>Fe</name>
        <dbReference type="ChEBI" id="CHEBI:18248"/>
    </ligandPart>
</feature>
<feature type="binding site" evidence="1">
    <location>
        <position position="190"/>
    </location>
    <ligand>
        <name>FAD</name>
        <dbReference type="ChEBI" id="CHEBI:57692"/>
    </ligand>
</feature>
<feature type="binding site" evidence="1">
    <location>
        <begin position="206"/>
        <end position="209"/>
    </location>
    <ligand>
        <name>FAD</name>
        <dbReference type="ChEBI" id="CHEBI:57692"/>
    </ligand>
</feature>
<feature type="binding site" evidence="1">
    <location>
        <begin position="268"/>
        <end position="273"/>
    </location>
    <ligand>
        <name>NADP(+)</name>
        <dbReference type="ChEBI" id="CHEBI:58349"/>
    </ligand>
</feature>
<feature type="binding site" evidence="1">
    <location>
        <begin position="388"/>
        <end position="391"/>
    </location>
    <ligand>
        <name>FAD</name>
        <dbReference type="ChEBI" id="CHEBI:57692"/>
    </ligand>
</feature>
<feature type="site" description="Involved in heme-bound ligand stabilization and O-O bond activation" evidence="1">
    <location>
        <position position="29"/>
    </location>
</feature>
<feature type="site" description="Influences the redox potential of the prosthetic heme and FAD groups" evidence="1">
    <location>
        <position position="84"/>
    </location>
</feature>
<feature type="site" description="Influences the redox potential of the prosthetic heme and FAD groups" evidence="1">
    <location>
        <position position="387"/>
    </location>
</feature>
<organism>
    <name type="scientific">Bacillus subtilis (strain 168)</name>
    <dbReference type="NCBI Taxonomy" id="224308"/>
    <lineage>
        <taxon>Bacteria</taxon>
        <taxon>Bacillati</taxon>
        <taxon>Bacillota</taxon>
        <taxon>Bacilli</taxon>
        <taxon>Bacillales</taxon>
        <taxon>Bacillaceae</taxon>
        <taxon>Bacillus</taxon>
    </lineage>
</organism>
<evidence type="ECO:0000250" key="1"/>
<evidence type="ECO:0000255" key="2">
    <source>
        <dbReference type="PROSITE-ProRule" id="PRU00238"/>
    </source>
</evidence>
<evidence type="ECO:0000269" key="3">
    <source>
    </source>
</evidence>
<evidence type="ECO:0000269" key="4">
    <source>
    </source>
</evidence>
<evidence type="ECO:0000305" key="5"/>
<gene>
    <name type="primary">hmp</name>
    <name type="synonym">ane3</name>
    <name type="synonym">ykiA</name>
    <name type="ordered locus">BSU13040</name>
</gene>
<proteinExistence type="evidence at transcript level"/>
<comment type="function">
    <text evidence="1">Is involved in NO detoxification in an aerobic process, termed nitric oxide dioxygenase (NOD) reaction that utilizes O(2) and NAD(P)H to convert NO to nitrate, which protects the bacterium from various noxious nitrogen compounds. Therefore, plays a central role in the inducible response to nitrosative stress (By similarity).</text>
</comment>
<comment type="catalytic activity">
    <reaction>
        <text>2 nitric oxide + NADPH + 2 O2 = 2 nitrate + NADP(+) + H(+)</text>
        <dbReference type="Rhea" id="RHEA:19465"/>
        <dbReference type="ChEBI" id="CHEBI:15378"/>
        <dbReference type="ChEBI" id="CHEBI:15379"/>
        <dbReference type="ChEBI" id="CHEBI:16480"/>
        <dbReference type="ChEBI" id="CHEBI:17632"/>
        <dbReference type="ChEBI" id="CHEBI:57783"/>
        <dbReference type="ChEBI" id="CHEBI:58349"/>
        <dbReference type="EC" id="1.14.12.17"/>
    </reaction>
</comment>
<comment type="catalytic activity">
    <reaction>
        <text>2 nitric oxide + NADH + 2 O2 = 2 nitrate + NAD(+) + H(+)</text>
        <dbReference type="Rhea" id="RHEA:19469"/>
        <dbReference type="ChEBI" id="CHEBI:15378"/>
        <dbReference type="ChEBI" id="CHEBI:15379"/>
        <dbReference type="ChEBI" id="CHEBI:16480"/>
        <dbReference type="ChEBI" id="CHEBI:17632"/>
        <dbReference type="ChEBI" id="CHEBI:57540"/>
        <dbReference type="ChEBI" id="CHEBI:57945"/>
        <dbReference type="EC" id="1.14.12.17"/>
    </reaction>
</comment>
<comment type="cofactor">
    <cofactor evidence="1">
        <name>heme b</name>
        <dbReference type="ChEBI" id="CHEBI:60344"/>
    </cofactor>
    <text evidence="1">Binds 1 heme b (iron(II)-protoporphyrin IX) group per subunit.</text>
</comment>
<comment type="cofactor">
    <cofactor evidence="1">
        <name>FAD</name>
        <dbReference type="ChEBI" id="CHEBI:57692"/>
    </cofactor>
    <text evidence="1">Binds 1 FAD per subunit.</text>
</comment>
<comment type="induction">
    <text evidence="3 4">By nitric oxide, nitrite, and under oxygen-limited conditions.</text>
</comment>
<comment type="domain">
    <text>Consists of two distinct domains; an N-terminal heme-containing oxygen-binding domain and a C-terminal reductase domain with binding sites for FAD and NAD(P)H.</text>
</comment>
<comment type="similarity">
    <text evidence="5">Belongs to the globin family. Two-domain flavohemoproteins subfamily.</text>
</comment>
<comment type="similarity">
    <text evidence="5">In the C-terminal section; belongs to the flavoprotein pyridine nucleotide cytochrome reductase family.</text>
</comment>
<reference key="1">
    <citation type="journal article" date="1996" name="J. Bacteriol.">
        <title>Oxygen-controlled regulation of the flavohemoglobin gene in Bacillus subtilis.</title>
        <authorList>
            <person name="Lacelle M."/>
            <person name="Kumano M."/>
            <person name="Kurita K."/>
            <person name="Yamane K."/>
            <person name="Zuber P."/>
            <person name="Nakano M.M."/>
        </authorList>
    </citation>
    <scope>NUCLEOTIDE SEQUENCE [GENOMIC DNA]</scope>
    <scope>TRANSCRIPTIONAL REGULATION</scope>
    <source>
        <strain>168</strain>
    </source>
</reference>
<reference key="2">
    <citation type="submission" date="1997-11" db="EMBL/GenBank/DDBJ databases">
        <title>Sequence of the Bacillus subtilis genome between xlyA and ykoR.</title>
        <authorList>
            <person name="Devine K.M."/>
        </authorList>
    </citation>
    <scope>NUCLEOTIDE SEQUENCE [GENOMIC DNA]</scope>
    <source>
        <strain>168</strain>
    </source>
</reference>
<reference key="3">
    <citation type="journal article" date="1997" name="Nature">
        <title>The complete genome sequence of the Gram-positive bacterium Bacillus subtilis.</title>
        <authorList>
            <person name="Kunst F."/>
            <person name="Ogasawara N."/>
            <person name="Moszer I."/>
            <person name="Albertini A.M."/>
            <person name="Alloni G."/>
            <person name="Azevedo V."/>
            <person name="Bertero M.G."/>
            <person name="Bessieres P."/>
            <person name="Bolotin A."/>
            <person name="Borchert S."/>
            <person name="Borriss R."/>
            <person name="Boursier L."/>
            <person name="Brans A."/>
            <person name="Braun M."/>
            <person name="Brignell S.C."/>
            <person name="Bron S."/>
            <person name="Brouillet S."/>
            <person name="Bruschi C.V."/>
            <person name="Caldwell B."/>
            <person name="Capuano V."/>
            <person name="Carter N.M."/>
            <person name="Choi S.-K."/>
            <person name="Codani J.-J."/>
            <person name="Connerton I.F."/>
            <person name="Cummings N.J."/>
            <person name="Daniel R.A."/>
            <person name="Denizot F."/>
            <person name="Devine K.M."/>
            <person name="Duesterhoeft A."/>
            <person name="Ehrlich S.D."/>
            <person name="Emmerson P.T."/>
            <person name="Entian K.-D."/>
            <person name="Errington J."/>
            <person name="Fabret C."/>
            <person name="Ferrari E."/>
            <person name="Foulger D."/>
            <person name="Fritz C."/>
            <person name="Fujita M."/>
            <person name="Fujita Y."/>
            <person name="Fuma S."/>
            <person name="Galizzi A."/>
            <person name="Galleron N."/>
            <person name="Ghim S.-Y."/>
            <person name="Glaser P."/>
            <person name="Goffeau A."/>
            <person name="Golightly E.J."/>
            <person name="Grandi G."/>
            <person name="Guiseppi G."/>
            <person name="Guy B.J."/>
            <person name="Haga K."/>
            <person name="Haiech J."/>
            <person name="Harwood C.R."/>
            <person name="Henaut A."/>
            <person name="Hilbert H."/>
            <person name="Holsappel S."/>
            <person name="Hosono S."/>
            <person name="Hullo M.-F."/>
            <person name="Itaya M."/>
            <person name="Jones L.-M."/>
            <person name="Joris B."/>
            <person name="Karamata D."/>
            <person name="Kasahara Y."/>
            <person name="Klaerr-Blanchard M."/>
            <person name="Klein C."/>
            <person name="Kobayashi Y."/>
            <person name="Koetter P."/>
            <person name="Koningstein G."/>
            <person name="Krogh S."/>
            <person name="Kumano M."/>
            <person name="Kurita K."/>
            <person name="Lapidus A."/>
            <person name="Lardinois S."/>
            <person name="Lauber J."/>
            <person name="Lazarevic V."/>
            <person name="Lee S.-M."/>
            <person name="Levine A."/>
            <person name="Liu H."/>
            <person name="Masuda S."/>
            <person name="Mauel C."/>
            <person name="Medigue C."/>
            <person name="Medina N."/>
            <person name="Mellado R.P."/>
            <person name="Mizuno M."/>
            <person name="Moestl D."/>
            <person name="Nakai S."/>
            <person name="Noback M."/>
            <person name="Noone D."/>
            <person name="O'Reilly M."/>
            <person name="Ogawa K."/>
            <person name="Ogiwara A."/>
            <person name="Oudega B."/>
            <person name="Park S.-H."/>
            <person name="Parro V."/>
            <person name="Pohl T.M."/>
            <person name="Portetelle D."/>
            <person name="Porwollik S."/>
            <person name="Prescott A.M."/>
            <person name="Presecan E."/>
            <person name="Pujic P."/>
            <person name="Purnelle B."/>
            <person name="Rapoport G."/>
            <person name="Rey M."/>
            <person name="Reynolds S."/>
            <person name="Rieger M."/>
            <person name="Rivolta C."/>
            <person name="Rocha E."/>
            <person name="Roche B."/>
            <person name="Rose M."/>
            <person name="Sadaie Y."/>
            <person name="Sato T."/>
            <person name="Scanlan E."/>
            <person name="Schleich S."/>
            <person name="Schroeter R."/>
            <person name="Scoffone F."/>
            <person name="Sekiguchi J."/>
            <person name="Sekowska A."/>
            <person name="Seror S.J."/>
            <person name="Serror P."/>
            <person name="Shin B.-S."/>
            <person name="Soldo B."/>
            <person name="Sorokin A."/>
            <person name="Tacconi E."/>
            <person name="Takagi T."/>
            <person name="Takahashi H."/>
            <person name="Takemaru K."/>
            <person name="Takeuchi M."/>
            <person name="Tamakoshi A."/>
            <person name="Tanaka T."/>
            <person name="Terpstra P."/>
            <person name="Tognoni A."/>
            <person name="Tosato V."/>
            <person name="Uchiyama S."/>
            <person name="Vandenbol M."/>
            <person name="Vannier F."/>
            <person name="Vassarotti A."/>
            <person name="Viari A."/>
            <person name="Wambutt R."/>
            <person name="Wedler E."/>
            <person name="Wedler H."/>
            <person name="Weitzenegger T."/>
            <person name="Winters P."/>
            <person name="Wipat A."/>
            <person name="Yamamoto H."/>
            <person name="Yamane K."/>
            <person name="Yasumoto K."/>
            <person name="Yata K."/>
            <person name="Yoshida K."/>
            <person name="Yoshikawa H.-F."/>
            <person name="Zumstein E."/>
            <person name="Yoshikawa H."/>
            <person name="Danchin A."/>
        </authorList>
    </citation>
    <scope>NUCLEOTIDE SEQUENCE [LARGE SCALE GENOMIC DNA]</scope>
    <source>
        <strain>168</strain>
    </source>
</reference>
<reference key="4">
    <citation type="journal article" date="2002" name="J. Bacteriol.">
        <title>Induction of ResDE-dependent gene expression in Bacillus subtilis in response to nitric oxide and nitrosative stress.</title>
        <authorList>
            <person name="Nakano M.M."/>
        </authorList>
    </citation>
    <scope>TRANSCRIPTIONAL REGULATION</scope>
</reference>
<protein>
    <recommendedName>
        <fullName>Flavohemoprotein</fullName>
    </recommendedName>
    <alternativeName>
        <fullName>Flavohemoglobin</fullName>
    </alternativeName>
    <alternativeName>
        <fullName>Hemoglobin-like protein</fullName>
    </alternativeName>
    <alternativeName>
        <fullName>Nitric oxide dioxygenase</fullName>
        <shortName>NO oxygenase</shortName>
        <shortName>NOD</shortName>
        <ecNumber>1.14.12.17</ecNumber>
    </alternativeName>
</protein>
<accession>P49852</accession>
<dbReference type="EC" id="1.14.12.17"/>
<dbReference type="EMBL" id="D78189">
    <property type="protein sequence ID" value="BAA11258.1"/>
    <property type="molecule type" value="Genomic_DNA"/>
</dbReference>
<dbReference type="EMBL" id="AJ002571">
    <property type="protein sequence ID" value="CAA05584.1"/>
    <property type="molecule type" value="Genomic_DNA"/>
</dbReference>
<dbReference type="EMBL" id="AL009126">
    <property type="protein sequence ID" value="CAB13161.1"/>
    <property type="molecule type" value="Genomic_DNA"/>
</dbReference>
<dbReference type="PIR" id="B69642">
    <property type="entry name" value="B69642"/>
</dbReference>
<dbReference type="SMR" id="P49852"/>
<dbReference type="FunCoup" id="P49852">
    <property type="interactions" value="270"/>
</dbReference>
<dbReference type="STRING" id="224308.BSU13040"/>
<dbReference type="PaxDb" id="224308-BSU13040"/>
<dbReference type="EnsemblBacteria" id="CAB13161">
    <property type="protein sequence ID" value="CAB13161"/>
    <property type="gene ID" value="BSU_13040"/>
</dbReference>
<dbReference type="GeneID" id="939891"/>
<dbReference type="KEGG" id="bsu:BSU13040"/>
<dbReference type="PATRIC" id="fig|224308.179.peg.1416"/>
<dbReference type="eggNOG" id="COG1017">
    <property type="taxonomic scope" value="Bacteria"/>
</dbReference>
<dbReference type="eggNOG" id="COG1018">
    <property type="taxonomic scope" value="Bacteria"/>
</dbReference>
<dbReference type="InParanoid" id="P49852"/>
<dbReference type="OrthoDB" id="9801223at2"/>
<dbReference type="PhylomeDB" id="P49852"/>
<dbReference type="BioCyc" id="BSUB:BSU13040-MONOMER"/>
<dbReference type="Proteomes" id="UP000001570">
    <property type="component" value="Chromosome"/>
</dbReference>
<dbReference type="GO" id="GO:0005737">
    <property type="term" value="C:cytoplasm"/>
    <property type="evidence" value="ECO:0000318"/>
    <property type="project" value="GO_Central"/>
</dbReference>
<dbReference type="GO" id="GO:0071949">
    <property type="term" value="F:FAD binding"/>
    <property type="evidence" value="ECO:0000318"/>
    <property type="project" value="GO_Central"/>
</dbReference>
<dbReference type="GO" id="GO:0020037">
    <property type="term" value="F:heme binding"/>
    <property type="evidence" value="ECO:0007669"/>
    <property type="project" value="InterPro"/>
</dbReference>
<dbReference type="GO" id="GO:0046872">
    <property type="term" value="F:metal ion binding"/>
    <property type="evidence" value="ECO:0007669"/>
    <property type="project" value="UniProtKB-KW"/>
</dbReference>
<dbReference type="GO" id="GO:0008941">
    <property type="term" value="F:nitric oxide dioxygenase NAD(P)H activity"/>
    <property type="evidence" value="ECO:0000318"/>
    <property type="project" value="GO_Central"/>
</dbReference>
<dbReference type="GO" id="GO:0019825">
    <property type="term" value="F:oxygen binding"/>
    <property type="evidence" value="ECO:0007669"/>
    <property type="project" value="InterPro"/>
</dbReference>
<dbReference type="GO" id="GO:0005344">
    <property type="term" value="F:oxygen carrier activity"/>
    <property type="evidence" value="ECO:0007669"/>
    <property type="project" value="UniProtKB-UniRule"/>
</dbReference>
<dbReference type="GO" id="GO:0071500">
    <property type="term" value="P:cellular response to nitrosative stress"/>
    <property type="evidence" value="ECO:0000318"/>
    <property type="project" value="GO_Central"/>
</dbReference>
<dbReference type="GO" id="GO:0046210">
    <property type="term" value="P:nitric oxide catabolic process"/>
    <property type="evidence" value="ECO:0000318"/>
    <property type="project" value="GO_Central"/>
</dbReference>
<dbReference type="GO" id="GO:0009636">
    <property type="term" value="P:response to toxic substance"/>
    <property type="evidence" value="ECO:0007669"/>
    <property type="project" value="UniProtKB-KW"/>
</dbReference>
<dbReference type="CDD" id="cd06184">
    <property type="entry name" value="flavohem_like_fad_nad_binding"/>
    <property type="match status" value="1"/>
</dbReference>
<dbReference type="CDD" id="cd14777">
    <property type="entry name" value="Yhb1-globin-like"/>
    <property type="match status" value="1"/>
</dbReference>
<dbReference type="FunFam" id="1.10.490.10:FF:000003">
    <property type="entry name" value="Flavohemoprotein"/>
    <property type="match status" value="1"/>
</dbReference>
<dbReference type="FunFam" id="2.40.30.10:FF:000034">
    <property type="entry name" value="Flavohemoprotein"/>
    <property type="match status" value="1"/>
</dbReference>
<dbReference type="FunFam" id="3.40.50.80:FF:000010">
    <property type="entry name" value="Flavohemoprotein"/>
    <property type="match status" value="1"/>
</dbReference>
<dbReference type="Gene3D" id="1.10.490.10">
    <property type="entry name" value="Globins"/>
    <property type="match status" value="1"/>
</dbReference>
<dbReference type="Gene3D" id="3.40.50.80">
    <property type="entry name" value="Nucleotide-binding domain of ferredoxin-NADP reductase (FNR) module"/>
    <property type="match status" value="1"/>
</dbReference>
<dbReference type="Gene3D" id="2.40.30.10">
    <property type="entry name" value="Translation factors"/>
    <property type="match status" value="1"/>
</dbReference>
<dbReference type="HAMAP" id="MF_01252">
    <property type="entry name" value="Hmp"/>
    <property type="match status" value="1"/>
</dbReference>
<dbReference type="InterPro" id="IPR008333">
    <property type="entry name" value="Cbr1-like_FAD-bd_dom"/>
</dbReference>
<dbReference type="InterPro" id="IPR017927">
    <property type="entry name" value="FAD-bd_FR_type"/>
</dbReference>
<dbReference type="InterPro" id="IPR039261">
    <property type="entry name" value="FNR_nucleotide-bd"/>
</dbReference>
<dbReference type="InterPro" id="IPR000971">
    <property type="entry name" value="Globin"/>
</dbReference>
<dbReference type="InterPro" id="IPR009050">
    <property type="entry name" value="Globin-like_sf"/>
</dbReference>
<dbReference type="InterPro" id="IPR012292">
    <property type="entry name" value="Globin/Proto"/>
</dbReference>
<dbReference type="InterPro" id="IPR023950">
    <property type="entry name" value="Hmp"/>
</dbReference>
<dbReference type="InterPro" id="IPR001433">
    <property type="entry name" value="OxRdtase_FAD/NAD-bd"/>
</dbReference>
<dbReference type="InterPro" id="IPR017938">
    <property type="entry name" value="Riboflavin_synthase-like_b-brl"/>
</dbReference>
<dbReference type="NCBIfam" id="NF009805">
    <property type="entry name" value="PRK13289.1"/>
    <property type="match status" value="1"/>
</dbReference>
<dbReference type="PANTHER" id="PTHR43396">
    <property type="entry name" value="FLAVOHEMOPROTEIN"/>
    <property type="match status" value="1"/>
</dbReference>
<dbReference type="PANTHER" id="PTHR43396:SF3">
    <property type="entry name" value="FLAVOHEMOPROTEIN"/>
    <property type="match status" value="1"/>
</dbReference>
<dbReference type="Pfam" id="PF00970">
    <property type="entry name" value="FAD_binding_6"/>
    <property type="match status" value="1"/>
</dbReference>
<dbReference type="Pfam" id="PF00042">
    <property type="entry name" value="Globin"/>
    <property type="match status" value="1"/>
</dbReference>
<dbReference type="Pfam" id="PF00175">
    <property type="entry name" value="NAD_binding_1"/>
    <property type="match status" value="1"/>
</dbReference>
<dbReference type="PRINTS" id="PR00410">
    <property type="entry name" value="PHEHYDRXLASE"/>
</dbReference>
<dbReference type="SUPFAM" id="SSF52343">
    <property type="entry name" value="Ferredoxin reductase-like, C-terminal NADP-linked domain"/>
    <property type="match status" value="1"/>
</dbReference>
<dbReference type="SUPFAM" id="SSF46458">
    <property type="entry name" value="Globin-like"/>
    <property type="match status" value="1"/>
</dbReference>
<dbReference type="SUPFAM" id="SSF63380">
    <property type="entry name" value="Riboflavin synthase domain-like"/>
    <property type="match status" value="1"/>
</dbReference>
<dbReference type="PROSITE" id="PS51384">
    <property type="entry name" value="FAD_FR"/>
    <property type="match status" value="1"/>
</dbReference>
<dbReference type="PROSITE" id="PS01033">
    <property type="entry name" value="GLOBIN"/>
    <property type="match status" value="1"/>
</dbReference>
<keyword id="KW-0216">Detoxification</keyword>
<keyword id="KW-0274">FAD</keyword>
<keyword id="KW-0285">Flavoprotein</keyword>
<keyword id="KW-0349">Heme</keyword>
<keyword id="KW-0408">Iron</keyword>
<keyword id="KW-0479">Metal-binding</keyword>
<keyword id="KW-0520">NAD</keyword>
<keyword id="KW-0521">NADP</keyword>
<keyword id="KW-0560">Oxidoreductase</keyword>
<keyword id="KW-0561">Oxygen transport</keyword>
<keyword id="KW-1185">Reference proteome</keyword>
<keyword id="KW-0813">Transport</keyword>
<name>HMP_BACSU</name>
<sequence length="399" mass="44729">MLDNKTIEIIKSTVPVLQQHGETITGRFYDRMFQDHPELLNIFNQTNQKKKTQRTALANAVIAAAANIDQLGNIIPVVKQIGHKHRSIGIKPEHYPIVGKYLLIAIKDVLGDAATPDIMQAWEKAYGVIADAFIGIEKDMYEQAEEQAGGWKEYKPFVIAKKERESKEITSFYLKPEDSKPLPEFQAGQYISIKVRIPDSEYTHIRQYSLSDMPGKDYYRISVKKDGVVSSYLHDGLQEGDSIEISAPAGDFVLDHASQKDLVLISAGVGITPMISMLKTSVSKQPERQILFIHAAKNSEYHALRHEVEEAAKHSAVKTAFVYREPTEEDRAGDLHFHEGQIDQQFLKELIANTDADYYICGSPSFITAMHKLVSELGSAPESIHYELFGPQLSLAQSV</sequence>